<protein>
    <recommendedName>
        <fullName evidence="1">Large ribosomal subunit protein uL29</fullName>
    </recommendedName>
    <alternativeName>
        <fullName evidence="2">50S ribosomal protein L29</fullName>
    </alternativeName>
</protein>
<accession>A8A5B7</accession>
<dbReference type="EMBL" id="CP000802">
    <property type="protein sequence ID" value="ABV07721.1"/>
    <property type="molecule type" value="Genomic_DNA"/>
</dbReference>
<dbReference type="RefSeq" id="WP_000644741.1">
    <property type="nucleotide sequence ID" value="NC_009800.1"/>
</dbReference>
<dbReference type="SMR" id="A8A5B7"/>
<dbReference type="GeneID" id="93778675"/>
<dbReference type="KEGG" id="ecx:EcHS_A3506"/>
<dbReference type="HOGENOM" id="CLU_158491_1_2_6"/>
<dbReference type="GO" id="GO:0022625">
    <property type="term" value="C:cytosolic large ribosomal subunit"/>
    <property type="evidence" value="ECO:0007669"/>
    <property type="project" value="TreeGrafter"/>
</dbReference>
<dbReference type="GO" id="GO:0003735">
    <property type="term" value="F:structural constituent of ribosome"/>
    <property type="evidence" value="ECO:0007669"/>
    <property type="project" value="InterPro"/>
</dbReference>
<dbReference type="GO" id="GO:0006412">
    <property type="term" value="P:translation"/>
    <property type="evidence" value="ECO:0007669"/>
    <property type="project" value="UniProtKB-UniRule"/>
</dbReference>
<dbReference type="CDD" id="cd00427">
    <property type="entry name" value="Ribosomal_L29_HIP"/>
    <property type="match status" value="1"/>
</dbReference>
<dbReference type="Gene3D" id="6.10.140.1970">
    <property type="match status" value="1"/>
</dbReference>
<dbReference type="HAMAP" id="MF_00374">
    <property type="entry name" value="Ribosomal_uL29"/>
    <property type="match status" value="1"/>
</dbReference>
<dbReference type="InterPro" id="IPR050063">
    <property type="entry name" value="Ribosomal_protein_uL29"/>
</dbReference>
<dbReference type="InterPro" id="IPR001854">
    <property type="entry name" value="Ribosomal_uL29"/>
</dbReference>
<dbReference type="InterPro" id="IPR018254">
    <property type="entry name" value="Ribosomal_uL29_CS"/>
</dbReference>
<dbReference type="InterPro" id="IPR036049">
    <property type="entry name" value="Ribosomal_uL29_sf"/>
</dbReference>
<dbReference type="NCBIfam" id="TIGR00012">
    <property type="entry name" value="L29"/>
    <property type="match status" value="1"/>
</dbReference>
<dbReference type="PANTHER" id="PTHR10916">
    <property type="entry name" value="60S RIBOSOMAL PROTEIN L35/50S RIBOSOMAL PROTEIN L29"/>
    <property type="match status" value="1"/>
</dbReference>
<dbReference type="PANTHER" id="PTHR10916:SF0">
    <property type="entry name" value="LARGE RIBOSOMAL SUBUNIT PROTEIN UL29C"/>
    <property type="match status" value="1"/>
</dbReference>
<dbReference type="Pfam" id="PF00831">
    <property type="entry name" value="Ribosomal_L29"/>
    <property type="match status" value="1"/>
</dbReference>
<dbReference type="SUPFAM" id="SSF46561">
    <property type="entry name" value="Ribosomal protein L29 (L29p)"/>
    <property type="match status" value="1"/>
</dbReference>
<dbReference type="PROSITE" id="PS00579">
    <property type="entry name" value="RIBOSOMAL_L29"/>
    <property type="match status" value="1"/>
</dbReference>
<evidence type="ECO:0000255" key="1">
    <source>
        <dbReference type="HAMAP-Rule" id="MF_00374"/>
    </source>
</evidence>
<evidence type="ECO:0000305" key="2"/>
<gene>
    <name evidence="1" type="primary">rpmC</name>
    <name type="ordered locus">EcHS_A3506</name>
</gene>
<feature type="chain" id="PRO_1000059966" description="Large ribosomal subunit protein uL29">
    <location>
        <begin position="1"/>
        <end position="63"/>
    </location>
</feature>
<keyword id="KW-0687">Ribonucleoprotein</keyword>
<keyword id="KW-0689">Ribosomal protein</keyword>
<proteinExistence type="inferred from homology"/>
<reference key="1">
    <citation type="journal article" date="2008" name="J. Bacteriol.">
        <title>The pangenome structure of Escherichia coli: comparative genomic analysis of E. coli commensal and pathogenic isolates.</title>
        <authorList>
            <person name="Rasko D.A."/>
            <person name="Rosovitz M.J."/>
            <person name="Myers G.S.A."/>
            <person name="Mongodin E.F."/>
            <person name="Fricke W.F."/>
            <person name="Gajer P."/>
            <person name="Crabtree J."/>
            <person name="Sebaihia M."/>
            <person name="Thomson N.R."/>
            <person name="Chaudhuri R."/>
            <person name="Henderson I.R."/>
            <person name="Sperandio V."/>
            <person name="Ravel J."/>
        </authorList>
    </citation>
    <scope>NUCLEOTIDE SEQUENCE [LARGE SCALE GENOMIC DNA]</scope>
    <source>
        <strain>HS</strain>
    </source>
</reference>
<organism>
    <name type="scientific">Escherichia coli O9:H4 (strain HS)</name>
    <dbReference type="NCBI Taxonomy" id="331112"/>
    <lineage>
        <taxon>Bacteria</taxon>
        <taxon>Pseudomonadati</taxon>
        <taxon>Pseudomonadota</taxon>
        <taxon>Gammaproteobacteria</taxon>
        <taxon>Enterobacterales</taxon>
        <taxon>Enterobacteriaceae</taxon>
        <taxon>Escherichia</taxon>
    </lineage>
</organism>
<name>RL29_ECOHS</name>
<comment type="similarity">
    <text evidence="1">Belongs to the universal ribosomal protein uL29 family.</text>
</comment>
<sequence>MKAKELREKSVEELNTELLNLLREQFNLRMQAASGQLQQSHLLKQVRRDVARVKTLLNEKAGA</sequence>